<keyword id="KW-0067">ATP-binding</keyword>
<keyword id="KW-1003">Cell membrane</keyword>
<keyword id="KW-0472">Membrane</keyword>
<keyword id="KW-0547">Nucleotide-binding</keyword>
<keyword id="KW-1185">Reference proteome</keyword>
<keyword id="KW-1278">Translocase</keyword>
<keyword id="KW-0813">Transport</keyword>
<dbReference type="EC" id="7.6.2.11" evidence="1"/>
<dbReference type="EMBL" id="CP000416">
    <property type="protein sequence ID" value="ABJ64920.1"/>
    <property type="molecule type" value="Genomic_DNA"/>
</dbReference>
<dbReference type="RefSeq" id="WP_011668542.1">
    <property type="nucleotide sequence ID" value="NC_008497.1"/>
</dbReference>
<dbReference type="SMR" id="Q03PF2"/>
<dbReference type="STRING" id="387344.LVIS_1859"/>
<dbReference type="KEGG" id="lbr:LVIS_1859"/>
<dbReference type="eggNOG" id="COG3842">
    <property type="taxonomic scope" value="Bacteria"/>
</dbReference>
<dbReference type="HOGENOM" id="CLU_000604_1_1_9"/>
<dbReference type="Proteomes" id="UP000001652">
    <property type="component" value="Chromosome"/>
</dbReference>
<dbReference type="GO" id="GO:0043190">
    <property type="term" value="C:ATP-binding cassette (ABC) transporter complex"/>
    <property type="evidence" value="ECO:0007669"/>
    <property type="project" value="InterPro"/>
</dbReference>
<dbReference type="GO" id="GO:0015594">
    <property type="term" value="F:ABC-type putrescine transporter activity"/>
    <property type="evidence" value="ECO:0007669"/>
    <property type="project" value="InterPro"/>
</dbReference>
<dbReference type="GO" id="GO:0005524">
    <property type="term" value="F:ATP binding"/>
    <property type="evidence" value="ECO:0007669"/>
    <property type="project" value="UniProtKB-KW"/>
</dbReference>
<dbReference type="GO" id="GO:0016887">
    <property type="term" value="F:ATP hydrolysis activity"/>
    <property type="evidence" value="ECO:0007669"/>
    <property type="project" value="InterPro"/>
</dbReference>
<dbReference type="CDD" id="cd03300">
    <property type="entry name" value="ABC_PotA_N"/>
    <property type="match status" value="1"/>
</dbReference>
<dbReference type="FunFam" id="3.40.50.300:FF:000133">
    <property type="entry name" value="Spermidine/putrescine import ATP-binding protein PotA"/>
    <property type="match status" value="1"/>
</dbReference>
<dbReference type="Gene3D" id="2.40.50.100">
    <property type="match status" value="1"/>
</dbReference>
<dbReference type="Gene3D" id="3.40.50.300">
    <property type="entry name" value="P-loop containing nucleotide triphosphate hydrolases"/>
    <property type="match status" value="1"/>
</dbReference>
<dbReference type="InterPro" id="IPR003593">
    <property type="entry name" value="AAA+_ATPase"/>
</dbReference>
<dbReference type="InterPro" id="IPR050093">
    <property type="entry name" value="ABC_SmlMolc_Importer"/>
</dbReference>
<dbReference type="InterPro" id="IPR003439">
    <property type="entry name" value="ABC_transporter-like_ATP-bd"/>
</dbReference>
<dbReference type="InterPro" id="IPR017871">
    <property type="entry name" value="ABC_transporter-like_CS"/>
</dbReference>
<dbReference type="InterPro" id="IPR008995">
    <property type="entry name" value="Mo/tungstate-bd_C_term_dom"/>
</dbReference>
<dbReference type="InterPro" id="IPR027417">
    <property type="entry name" value="P-loop_NTPase"/>
</dbReference>
<dbReference type="InterPro" id="IPR005893">
    <property type="entry name" value="PotA-like"/>
</dbReference>
<dbReference type="InterPro" id="IPR017879">
    <property type="entry name" value="PotA_ATP-bd"/>
</dbReference>
<dbReference type="InterPro" id="IPR013611">
    <property type="entry name" value="Transp-assoc_OB_typ2"/>
</dbReference>
<dbReference type="NCBIfam" id="TIGR01187">
    <property type="entry name" value="potA"/>
    <property type="match status" value="1"/>
</dbReference>
<dbReference type="PANTHER" id="PTHR42781">
    <property type="entry name" value="SPERMIDINE/PUTRESCINE IMPORT ATP-BINDING PROTEIN POTA"/>
    <property type="match status" value="1"/>
</dbReference>
<dbReference type="PANTHER" id="PTHR42781:SF4">
    <property type="entry name" value="SPERMIDINE_PUTRESCINE IMPORT ATP-BINDING PROTEIN POTA"/>
    <property type="match status" value="1"/>
</dbReference>
<dbReference type="Pfam" id="PF00005">
    <property type="entry name" value="ABC_tran"/>
    <property type="match status" value="1"/>
</dbReference>
<dbReference type="Pfam" id="PF08402">
    <property type="entry name" value="TOBE_2"/>
    <property type="match status" value="1"/>
</dbReference>
<dbReference type="SMART" id="SM00382">
    <property type="entry name" value="AAA"/>
    <property type="match status" value="1"/>
</dbReference>
<dbReference type="SUPFAM" id="SSF50331">
    <property type="entry name" value="MOP-like"/>
    <property type="match status" value="1"/>
</dbReference>
<dbReference type="SUPFAM" id="SSF52540">
    <property type="entry name" value="P-loop containing nucleoside triphosphate hydrolases"/>
    <property type="match status" value="1"/>
</dbReference>
<dbReference type="PROSITE" id="PS00211">
    <property type="entry name" value="ABC_TRANSPORTER_1"/>
    <property type="match status" value="1"/>
</dbReference>
<dbReference type="PROSITE" id="PS50893">
    <property type="entry name" value="ABC_TRANSPORTER_2"/>
    <property type="match status" value="1"/>
</dbReference>
<dbReference type="PROSITE" id="PS51305">
    <property type="entry name" value="POTA"/>
    <property type="match status" value="1"/>
</dbReference>
<comment type="function">
    <text evidence="1">Part of the ABC transporter complex PotABCD involved in spermidine/putrescine import. Responsible for energy coupling to the transport system.</text>
</comment>
<comment type="catalytic activity">
    <reaction evidence="1">
        <text>ATP + H2O + polyamine-[polyamine-binding protein]Side 1 = ADP + phosphate + polyamineSide 2 + [polyamine-binding protein]Side 1.</text>
        <dbReference type="EC" id="7.6.2.11"/>
    </reaction>
</comment>
<comment type="subunit">
    <text evidence="1">The complex is composed of two ATP-binding proteins (PotA), two transmembrane proteins (PotB and PotC) and a solute-binding protein (PotD).</text>
</comment>
<comment type="subcellular location">
    <subcellularLocation>
        <location evidence="1">Cell membrane</location>
        <topology evidence="1">Peripheral membrane protein</topology>
    </subcellularLocation>
</comment>
<comment type="similarity">
    <text evidence="1">Belongs to the ABC transporter superfamily. Spermidine/putrescine importer (TC 3.A.1.11.1) family.</text>
</comment>
<reference key="1">
    <citation type="journal article" date="2006" name="Proc. Natl. Acad. Sci. U.S.A.">
        <title>Comparative genomics of the lactic acid bacteria.</title>
        <authorList>
            <person name="Makarova K.S."/>
            <person name="Slesarev A."/>
            <person name="Wolf Y.I."/>
            <person name="Sorokin A."/>
            <person name="Mirkin B."/>
            <person name="Koonin E.V."/>
            <person name="Pavlov A."/>
            <person name="Pavlova N."/>
            <person name="Karamychev V."/>
            <person name="Polouchine N."/>
            <person name="Shakhova V."/>
            <person name="Grigoriev I."/>
            <person name="Lou Y."/>
            <person name="Rohksar D."/>
            <person name="Lucas S."/>
            <person name="Huang K."/>
            <person name="Goodstein D.M."/>
            <person name="Hawkins T."/>
            <person name="Plengvidhya V."/>
            <person name="Welker D."/>
            <person name="Hughes J."/>
            <person name="Goh Y."/>
            <person name="Benson A."/>
            <person name="Baldwin K."/>
            <person name="Lee J.-H."/>
            <person name="Diaz-Muniz I."/>
            <person name="Dosti B."/>
            <person name="Smeianov V."/>
            <person name="Wechter W."/>
            <person name="Barabote R."/>
            <person name="Lorca G."/>
            <person name="Altermann E."/>
            <person name="Barrangou R."/>
            <person name="Ganesan B."/>
            <person name="Xie Y."/>
            <person name="Rawsthorne H."/>
            <person name="Tamir D."/>
            <person name="Parker C."/>
            <person name="Breidt F."/>
            <person name="Broadbent J.R."/>
            <person name="Hutkins R."/>
            <person name="O'Sullivan D."/>
            <person name="Steele J."/>
            <person name="Unlu G."/>
            <person name="Saier M.H. Jr."/>
            <person name="Klaenhammer T."/>
            <person name="Richardson P."/>
            <person name="Kozyavkin S."/>
            <person name="Weimer B.C."/>
            <person name="Mills D.A."/>
        </authorList>
    </citation>
    <scope>NUCLEOTIDE SEQUENCE [LARGE SCALE GENOMIC DNA]</scope>
    <source>
        <strain>ATCC 367 / BCRC 12310 / CIP 105137 / JCM 1170 / LMG 11437 / NCIMB 947 / NCTC 947</strain>
    </source>
</reference>
<evidence type="ECO:0000255" key="1">
    <source>
        <dbReference type="HAMAP-Rule" id="MF_01726"/>
    </source>
</evidence>
<organism>
    <name type="scientific">Levilactobacillus brevis (strain ATCC 367 / BCRC 12310 / CIP 105137 / JCM 1170 / LMG 11437 / NCIMB 947 / NCTC 947)</name>
    <name type="common">Lactobacillus brevis</name>
    <dbReference type="NCBI Taxonomy" id="387344"/>
    <lineage>
        <taxon>Bacteria</taxon>
        <taxon>Bacillati</taxon>
        <taxon>Bacillota</taxon>
        <taxon>Bacilli</taxon>
        <taxon>Lactobacillales</taxon>
        <taxon>Lactobacillaceae</taxon>
        <taxon>Levilactobacillus</taxon>
    </lineage>
</organism>
<feature type="chain" id="PRO_0000286227" description="Spermidine/putrescine import ATP-binding protein PotA">
    <location>
        <begin position="1"/>
        <end position="370"/>
    </location>
</feature>
<feature type="domain" description="ABC transporter" evidence="1">
    <location>
        <begin position="6"/>
        <end position="236"/>
    </location>
</feature>
<feature type="binding site" evidence="1">
    <location>
        <begin position="38"/>
        <end position="45"/>
    </location>
    <ligand>
        <name>ATP</name>
        <dbReference type="ChEBI" id="CHEBI:30616"/>
    </ligand>
</feature>
<gene>
    <name evidence="1" type="primary">potA</name>
    <name type="ordered locus">LVIS_1859</name>
</gene>
<name>POTA_LEVBA</name>
<sequence length="370" mass="41306">MTQPIIELHQVTKRYADNTILSNINLTLESGKFYTLLGPSGCGKTTILRTIAGFTDATTGDILFAGKRINDVPANKRNVNTVFQDYALFPHMTVAENVAFGLTLQKRPKSEIAERVNQALRLVQLADYGDRAISALSGGQQQRIAIARAIVMQPQVLLLDEPLSALDAKLRRQMQYELRDLQQRLGITFLFVTHDQEEALAMSDEIFVMNQGEILQSGSPVDIYDEPINHFVADFIGESNILPGKMIDDFQVAFGGHQFECADAGIPVNEPVEIVIRPEDLTLTDLAHAKLTVTINTQLFRGDYYEIAATDGLGNDWLIHSVNPAEDGDQIGLTFRPQDLHVMRFGEKEAEFDARLETYEGTEDDRFDET</sequence>
<protein>
    <recommendedName>
        <fullName evidence="1">Spermidine/putrescine import ATP-binding protein PotA</fullName>
        <ecNumber evidence="1">7.6.2.11</ecNumber>
    </recommendedName>
</protein>
<proteinExistence type="inferred from homology"/>
<accession>Q03PF2</accession>